<comment type="function">
    <text evidence="1">ATP-dependent specificity component of the Clp protease. It directs the protease to specific substrates. Can perform chaperone functions in the absence of ClpP.</text>
</comment>
<comment type="subunit">
    <text evidence="1">Component of the ClpX-ClpP complex. Forms a hexameric ring that, in the presence of ATP, binds to fourteen ClpP subunits assembled into a disk-like structure with a central cavity, resembling the structure of eukaryotic proteasomes.</text>
</comment>
<comment type="similarity">
    <text evidence="1">Belongs to the ClpX chaperone family.</text>
</comment>
<reference key="1">
    <citation type="journal article" date="2004" name="Proc. Natl. Acad. Sci. U.S.A.">
        <title>Complete genomes of two clinical Staphylococcus aureus strains: evidence for the rapid evolution of virulence and drug resistance.</title>
        <authorList>
            <person name="Holden M.T.G."/>
            <person name="Feil E.J."/>
            <person name="Lindsay J.A."/>
            <person name="Peacock S.J."/>
            <person name="Day N.P.J."/>
            <person name="Enright M.C."/>
            <person name="Foster T.J."/>
            <person name="Moore C.E."/>
            <person name="Hurst L."/>
            <person name="Atkin R."/>
            <person name="Barron A."/>
            <person name="Bason N."/>
            <person name="Bentley S.D."/>
            <person name="Chillingworth C."/>
            <person name="Chillingworth T."/>
            <person name="Churcher C."/>
            <person name="Clark L."/>
            <person name="Corton C."/>
            <person name="Cronin A."/>
            <person name="Doggett J."/>
            <person name="Dowd L."/>
            <person name="Feltwell T."/>
            <person name="Hance Z."/>
            <person name="Harris B."/>
            <person name="Hauser H."/>
            <person name="Holroyd S."/>
            <person name="Jagels K."/>
            <person name="James K.D."/>
            <person name="Lennard N."/>
            <person name="Line A."/>
            <person name="Mayes R."/>
            <person name="Moule S."/>
            <person name="Mungall K."/>
            <person name="Ormond D."/>
            <person name="Quail M.A."/>
            <person name="Rabbinowitsch E."/>
            <person name="Rutherford K.M."/>
            <person name="Sanders M."/>
            <person name="Sharp S."/>
            <person name="Simmonds M."/>
            <person name="Stevens K."/>
            <person name="Whitehead S."/>
            <person name="Barrell B.G."/>
            <person name="Spratt B.G."/>
            <person name="Parkhill J."/>
        </authorList>
    </citation>
    <scope>NUCLEOTIDE SEQUENCE [LARGE SCALE GENOMIC DNA]</scope>
    <source>
        <strain>MSSA476</strain>
    </source>
</reference>
<feature type="chain" id="PRO_0000160423" description="ATP-dependent Clp protease ATP-binding subunit ClpX">
    <location>
        <begin position="1"/>
        <end position="420"/>
    </location>
</feature>
<feature type="domain" description="ClpX-type ZB" evidence="2">
    <location>
        <begin position="1"/>
        <end position="54"/>
    </location>
</feature>
<feature type="binding site" evidence="2">
    <location>
        <position position="13"/>
    </location>
    <ligand>
        <name>Zn(2+)</name>
        <dbReference type="ChEBI" id="CHEBI:29105"/>
    </ligand>
</feature>
<feature type="binding site" evidence="2">
    <location>
        <position position="16"/>
    </location>
    <ligand>
        <name>Zn(2+)</name>
        <dbReference type="ChEBI" id="CHEBI:29105"/>
    </ligand>
</feature>
<feature type="binding site" evidence="2">
    <location>
        <position position="35"/>
    </location>
    <ligand>
        <name>Zn(2+)</name>
        <dbReference type="ChEBI" id="CHEBI:29105"/>
    </ligand>
</feature>
<feature type="binding site" evidence="2">
    <location>
        <position position="38"/>
    </location>
    <ligand>
        <name>Zn(2+)</name>
        <dbReference type="ChEBI" id="CHEBI:29105"/>
    </ligand>
</feature>
<feature type="binding site" evidence="1">
    <location>
        <begin position="118"/>
        <end position="125"/>
    </location>
    <ligand>
        <name>ATP</name>
        <dbReference type="ChEBI" id="CHEBI:30616"/>
    </ligand>
</feature>
<evidence type="ECO:0000255" key="1">
    <source>
        <dbReference type="HAMAP-Rule" id="MF_00175"/>
    </source>
</evidence>
<evidence type="ECO:0000255" key="2">
    <source>
        <dbReference type="PROSITE-ProRule" id="PRU01250"/>
    </source>
</evidence>
<protein>
    <recommendedName>
        <fullName evidence="1">ATP-dependent Clp protease ATP-binding subunit ClpX</fullName>
    </recommendedName>
</protein>
<proteinExistence type="inferred from homology"/>
<accession>Q6G8Q1</accession>
<dbReference type="EMBL" id="BX571857">
    <property type="protein sequence ID" value="CAG43405.1"/>
    <property type="molecule type" value="Genomic_DNA"/>
</dbReference>
<dbReference type="RefSeq" id="WP_000472304.1">
    <property type="nucleotide sequence ID" value="NC_002953.3"/>
</dbReference>
<dbReference type="SMR" id="Q6G8Q1"/>
<dbReference type="KEGG" id="sas:SAS1603"/>
<dbReference type="HOGENOM" id="CLU_014218_8_2_9"/>
<dbReference type="GO" id="GO:0009376">
    <property type="term" value="C:HslUV protease complex"/>
    <property type="evidence" value="ECO:0007669"/>
    <property type="project" value="TreeGrafter"/>
</dbReference>
<dbReference type="GO" id="GO:0005524">
    <property type="term" value="F:ATP binding"/>
    <property type="evidence" value="ECO:0007669"/>
    <property type="project" value="UniProtKB-UniRule"/>
</dbReference>
<dbReference type="GO" id="GO:0016887">
    <property type="term" value="F:ATP hydrolysis activity"/>
    <property type="evidence" value="ECO:0007669"/>
    <property type="project" value="InterPro"/>
</dbReference>
<dbReference type="GO" id="GO:0140662">
    <property type="term" value="F:ATP-dependent protein folding chaperone"/>
    <property type="evidence" value="ECO:0007669"/>
    <property type="project" value="InterPro"/>
</dbReference>
<dbReference type="GO" id="GO:0046983">
    <property type="term" value="F:protein dimerization activity"/>
    <property type="evidence" value="ECO:0007669"/>
    <property type="project" value="InterPro"/>
</dbReference>
<dbReference type="GO" id="GO:0051082">
    <property type="term" value="F:unfolded protein binding"/>
    <property type="evidence" value="ECO:0007669"/>
    <property type="project" value="UniProtKB-UniRule"/>
</dbReference>
<dbReference type="GO" id="GO:0008270">
    <property type="term" value="F:zinc ion binding"/>
    <property type="evidence" value="ECO:0007669"/>
    <property type="project" value="InterPro"/>
</dbReference>
<dbReference type="GO" id="GO:0051301">
    <property type="term" value="P:cell division"/>
    <property type="evidence" value="ECO:0007669"/>
    <property type="project" value="TreeGrafter"/>
</dbReference>
<dbReference type="GO" id="GO:0051603">
    <property type="term" value="P:proteolysis involved in protein catabolic process"/>
    <property type="evidence" value="ECO:0007669"/>
    <property type="project" value="TreeGrafter"/>
</dbReference>
<dbReference type="CDD" id="cd19497">
    <property type="entry name" value="RecA-like_ClpX"/>
    <property type="match status" value="1"/>
</dbReference>
<dbReference type="FunFam" id="1.10.8.60:FF:000002">
    <property type="entry name" value="ATP-dependent Clp protease ATP-binding subunit ClpX"/>
    <property type="match status" value="1"/>
</dbReference>
<dbReference type="FunFam" id="3.40.50.300:FF:000005">
    <property type="entry name" value="ATP-dependent Clp protease ATP-binding subunit ClpX"/>
    <property type="match status" value="1"/>
</dbReference>
<dbReference type="Gene3D" id="1.10.8.60">
    <property type="match status" value="1"/>
</dbReference>
<dbReference type="Gene3D" id="6.20.220.10">
    <property type="entry name" value="ClpX chaperone, C4-type zinc finger domain"/>
    <property type="match status" value="1"/>
</dbReference>
<dbReference type="Gene3D" id="3.40.50.300">
    <property type="entry name" value="P-loop containing nucleotide triphosphate hydrolases"/>
    <property type="match status" value="1"/>
</dbReference>
<dbReference type="HAMAP" id="MF_00175">
    <property type="entry name" value="ClpX"/>
    <property type="match status" value="1"/>
</dbReference>
<dbReference type="InterPro" id="IPR003593">
    <property type="entry name" value="AAA+_ATPase"/>
</dbReference>
<dbReference type="InterPro" id="IPR050052">
    <property type="entry name" value="ATP-dep_Clp_protease_ClpX"/>
</dbReference>
<dbReference type="InterPro" id="IPR003959">
    <property type="entry name" value="ATPase_AAA_core"/>
</dbReference>
<dbReference type="InterPro" id="IPR019489">
    <property type="entry name" value="Clp_ATPase_C"/>
</dbReference>
<dbReference type="InterPro" id="IPR004487">
    <property type="entry name" value="Clp_protease_ATP-bd_su_ClpX"/>
</dbReference>
<dbReference type="InterPro" id="IPR046425">
    <property type="entry name" value="ClpX_bact"/>
</dbReference>
<dbReference type="InterPro" id="IPR027417">
    <property type="entry name" value="P-loop_NTPase"/>
</dbReference>
<dbReference type="InterPro" id="IPR010603">
    <property type="entry name" value="Znf_CppX_C4"/>
</dbReference>
<dbReference type="InterPro" id="IPR038366">
    <property type="entry name" value="Znf_CppX_C4_sf"/>
</dbReference>
<dbReference type="NCBIfam" id="TIGR00382">
    <property type="entry name" value="clpX"/>
    <property type="match status" value="1"/>
</dbReference>
<dbReference type="NCBIfam" id="NF003745">
    <property type="entry name" value="PRK05342.1"/>
    <property type="match status" value="1"/>
</dbReference>
<dbReference type="PANTHER" id="PTHR48102:SF7">
    <property type="entry name" value="ATP-DEPENDENT CLP PROTEASE ATP-BINDING SUBUNIT CLPX-LIKE, MITOCHONDRIAL"/>
    <property type="match status" value="1"/>
</dbReference>
<dbReference type="PANTHER" id="PTHR48102">
    <property type="entry name" value="ATP-DEPENDENT CLP PROTEASE ATP-BINDING SUBUNIT CLPX-LIKE, MITOCHONDRIAL-RELATED"/>
    <property type="match status" value="1"/>
</dbReference>
<dbReference type="Pfam" id="PF07724">
    <property type="entry name" value="AAA_2"/>
    <property type="match status" value="1"/>
</dbReference>
<dbReference type="Pfam" id="PF10431">
    <property type="entry name" value="ClpB_D2-small"/>
    <property type="match status" value="1"/>
</dbReference>
<dbReference type="Pfam" id="PF06689">
    <property type="entry name" value="zf-C4_ClpX"/>
    <property type="match status" value="1"/>
</dbReference>
<dbReference type="SMART" id="SM00382">
    <property type="entry name" value="AAA"/>
    <property type="match status" value="1"/>
</dbReference>
<dbReference type="SMART" id="SM01086">
    <property type="entry name" value="ClpB_D2-small"/>
    <property type="match status" value="1"/>
</dbReference>
<dbReference type="SMART" id="SM00994">
    <property type="entry name" value="zf-C4_ClpX"/>
    <property type="match status" value="1"/>
</dbReference>
<dbReference type="SUPFAM" id="SSF57716">
    <property type="entry name" value="Glucocorticoid receptor-like (DNA-binding domain)"/>
    <property type="match status" value="1"/>
</dbReference>
<dbReference type="SUPFAM" id="SSF52540">
    <property type="entry name" value="P-loop containing nucleoside triphosphate hydrolases"/>
    <property type="match status" value="1"/>
</dbReference>
<dbReference type="PROSITE" id="PS51902">
    <property type="entry name" value="CLPX_ZB"/>
    <property type="match status" value="1"/>
</dbReference>
<keyword id="KW-0067">ATP-binding</keyword>
<keyword id="KW-0143">Chaperone</keyword>
<keyword id="KW-0479">Metal-binding</keyword>
<keyword id="KW-0547">Nucleotide-binding</keyword>
<keyword id="KW-0862">Zinc</keyword>
<gene>
    <name evidence="1" type="primary">clpX</name>
    <name type="ordered locus">SAS1603</name>
</gene>
<organism>
    <name type="scientific">Staphylococcus aureus (strain MSSA476)</name>
    <dbReference type="NCBI Taxonomy" id="282459"/>
    <lineage>
        <taxon>Bacteria</taxon>
        <taxon>Bacillati</taxon>
        <taxon>Bacillota</taxon>
        <taxon>Bacilli</taxon>
        <taxon>Bacillales</taxon>
        <taxon>Staphylococcaceae</taxon>
        <taxon>Staphylococcus</taxon>
    </lineage>
</organism>
<sequence length="420" mass="46296">MFKFNEDEENLKCSFCGKDQDQVKKLVAGSGVYICNECIELCSEIVEEELAQNTSEAMTELPTPKEIMDHLNEYVIGQEKAKKSLAVAVYNHYKRIQQLGPKEDDVELQKSNIALIGPTGSGKTLLAQTLAKTLNVPFAIADATSLTEAGYVGDDVENILLRLIQAADFDIDKAEKGIIYVDEIDKIARKSENTSITRDVSGEGVQQALLKILEGTTASVPPQGGRKHPNQEMIQIDTTNILFILGGAFDGIEEVIKRRLGEKVIGFSSNEADKYDEQALLAQIRPEDLQAYGLIPEFIGRVPIVANLETLDVTALKNILTQPKNALVKQYTKMLELDNVDLEFTEEALSAISEKAIERKTGARGLRSIIEESLIDIMFDVPSNENVTKVVITAQTINEETEPELYDAEGNLINNSKTSA</sequence>
<name>CLPX_STAAS</name>